<dbReference type="EMBL" id="DS480492">
    <property type="protein sequence ID" value="EDO14966.1"/>
    <property type="molecule type" value="Genomic_DNA"/>
</dbReference>
<dbReference type="RefSeq" id="XP_001642824.1">
    <property type="nucleotide sequence ID" value="XM_001642774.1"/>
</dbReference>
<dbReference type="SMR" id="A7TRZ8"/>
<dbReference type="FunCoup" id="A7TRZ8">
    <property type="interactions" value="30"/>
</dbReference>
<dbReference type="GeneID" id="5543009"/>
<dbReference type="KEGG" id="vpo:Kpol_388p10"/>
<dbReference type="eggNOG" id="ENOG502S35W">
    <property type="taxonomic scope" value="Eukaryota"/>
</dbReference>
<dbReference type="HOGENOM" id="CLU_106818_0_0_1"/>
<dbReference type="InParanoid" id="A7TRZ8"/>
<dbReference type="OMA" id="FMRLKPF"/>
<dbReference type="OrthoDB" id="3991133at2759"/>
<dbReference type="PhylomeDB" id="A7TRZ8"/>
<dbReference type="Proteomes" id="UP000000267">
    <property type="component" value="Unassembled WGS sequence"/>
</dbReference>
<dbReference type="GO" id="GO:0030437">
    <property type="term" value="P:ascospore formation"/>
    <property type="evidence" value="ECO:0007669"/>
    <property type="project" value="EnsemblFungi"/>
</dbReference>
<dbReference type="GO" id="GO:0006302">
    <property type="term" value="P:double-strand break repair"/>
    <property type="evidence" value="ECO:0007669"/>
    <property type="project" value="EnsemblFungi"/>
</dbReference>
<dbReference type="GO" id="GO:0006312">
    <property type="term" value="P:mitotic recombination"/>
    <property type="evidence" value="ECO:0007669"/>
    <property type="project" value="EnsemblFungi"/>
</dbReference>
<proteinExistence type="inferred from homology"/>
<keyword id="KW-1185">Reference proteome</keyword>
<keyword id="KW-0749">Sporulation</keyword>
<sequence length="205" mass="24519">MDSVPSIRILTKNAVITSKYTLLKNHSKYYMPNHNLKDIDEDTVVKMYYRRFIRLRPLISRTRMVKETYTSYIRYKFKIENYQLKRKLVTGIEEQRPLIPTLQKSLEFIIKSVSFIPETKTIKFKIARDNTICRQVLKNLLTVEYQKENFIEKRSKGSELYQLLRVDFNHLVNSNNNLKFTSQLKVFNDFDMCLILMNETIGTRL</sequence>
<feature type="chain" id="PRO_0000399062" description="Increased recombination centers protein 19">
    <location>
        <begin position="1"/>
        <end position="205"/>
    </location>
</feature>
<accession>A7TRZ8</accession>
<name>IRC19_VANPO</name>
<comment type="function">
    <text evidence="1">Involved in sporulation and maintenance of the mitochondrial DNA. Is probably involved in a pathway contributing to genomic integrity (By similarity).</text>
</comment>
<comment type="similarity">
    <text evidence="2">Belongs to the IRC19 family.</text>
</comment>
<gene>
    <name type="primary">IRC19</name>
    <name type="synonym">RRG4</name>
    <name type="ORF">Kpol_388p10</name>
</gene>
<evidence type="ECO:0000250" key="1"/>
<evidence type="ECO:0000305" key="2"/>
<reference key="1">
    <citation type="journal article" date="2007" name="Proc. Natl. Acad. Sci. U.S.A.">
        <title>Independent sorting-out of thousands of duplicated gene pairs in two yeast species descended from a whole-genome duplication.</title>
        <authorList>
            <person name="Scannell D.R."/>
            <person name="Frank A.C."/>
            <person name="Conant G.C."/>
            <person name="Byrne K.P."/>
            <person name="Woolfit M."/>
            <person name="Wolfe K.H."/>
        </authorList>
    </citation>
    <scope>NUCLEOTIDE SEQUENCE [LARGE SCALE GENOMIC DNA]</scope>
    <source>
        <strain>ATCC 22028 / DSM 70294 / BCRC 21397 / CBS 2163 / NBRC 10782 / NRRL Y-8283 / UCD 57-17</strain>
    </source>
</reference>
<protein>
    <recommendedName>
        <fullName>Increased recombination centers protein 19</fullName>
    </recommendedName>
</protein>
<organism>
    <name type="scientific">Vanderwaltozyma polyspora (strain ATCC 22028 / DSM 70294 / BCRC 21397 / CBS 2163 / NBRC 10782 / NRRL Y-8283 / UCD 57-17)</name>
    <name type="common">Kluyveromyces polysporus</name>
    <dbReference type="NCBI Taxonomy" id="436907"/>
    <lineage>
        <taxon>Eukaryota</taxon>
        <taxon>Fungi</taxon>
        <taxon>Dikarya</taxon>
        <taxon>Ascomycota</taxon>
        <taxon>Saccharomycotina</taxon>
        <taxon>Saccharomycetes</taxon>
        <taxon>Saccharomycetales</taxon>
        <taxon>Saccharomycetaceae</taxon>
        <taxon>Vanderwaltozyma</taxon>
    </lineage>
</organism>